<proteinExistence type="inferred from homology"/>
<evidence type="ECO:0000255" key="1">
    <source>
        <dbReference type="HAMAP-Rule" id="MF_01518"/>
    </source>
</evidence>
<protein>
    <recommendedName>
        <fullName evidence="1">Adenine deaminase</fullName>
        <shortName evidence="1">Adenase</shortName>
        <shortName evidence="1">Adenine aminase</shortName>
        <ecNumber evidence="1">3.5.4.2</ecNumber>
    </recommendedName>
</protein>
<dbReference type="EC" id="3.5.4.2" evidence="1"/>
<dbReference type="EMBL" id="CP000780">
    <property type="protein sequence ID" value="ABS56092.1"/>
    <property type="molecule type" value="Genomic_DNA"/>
</dbReference>
<dbReference type="RefSeq" id="WP_012107135.1">
    <property type="nucleotide sequence ID" value="NC_009712.1"/>
</dbReference>
<dbReference type="SMR" id="A7I8N1"/>
<dbReference type="STRING" id="456442.Mboo_1575"/>
<dbReference type="GeneID" id="5410587"/>
<dbReference type="KEGG" id="mbn:Mboo_1575"/>
<dbReference type="eggNOG" id="arCOG00693">
    <property type="taxonomic scope" value="Archaea"/>
</dbReference>
<dbReference type="HOGENOM" id="CLU_027935_0_0_2"/>
<dbReference type="OrthoDB" id="24954at2157"/>
<dbReference type="Proteomes" id="UP000002408">
    <property type="component" value="Chromosome"/>
</dbReference>
<dbReference type="GO" id="GO:0000034">
    <property type="term" value="F:adenine deaminase activity"/>
    <property type="evidence" value="ECO:0007669"/>
    <property type="project" value="UniProtKB-UniRule"/>
</dbReference>
<dbReference type="GO" id="GO:0006146">
    <property type="term" value="P:adenine catabolic process"/>
    <property type="evidence" value="ECO:0007669"/>
    <property type="project" value="InterPro"/>
</dbReference>
<dbReference type="CDD" id="cd01295">
    <property type="entry name" value="AdeC"/>
    <property type="match status" value="1"/>
</dbReference>
<dbReference type="Gene3D" id="3.20.20.140">
    <property type="entry name" value="Metal-dependent hydrolases"/>
    <property type="match status" value="1"/>
</dbReference>
<dbReference type="Gene3D" id="2.30.40.10">
    <property type="entry name" value="Urease, subunit C, domain 1"/>
    <property type="match status" value="1"/>
</dbReference>
<dbReference type="HAMAP" id="MF_01518">
    <property type="entry name" value="Adenine_deamin"/>
    <property type="match status" value="1"/>
</dbReference>
<dbReference type="InterPro" id="IPR006679">
    <property type="entry name" value="Adenine_deam"/>
</dbReference>
<dbReference type="InterPro" id="IPR026912">
    <property type="entry name" value="Adenine_deam_C"/>
</dbReference>
<dbReference type="InterPro" id="IPR006680">
    <property type="entry name" value="Amidohydro-rel"/>
</dbReference>
<dbReference type="InterPro" id="IPR011059">
    <property type="entry name" value="Metal-dep_hydrolase_composite"/>
</dbReference>
<dbReference type="InterPro" id="IPR032466">
    <property type="entry name" value="Metal_Hydrolase"/>
</dbReference>
<dbReference type="NCBIfam" id="TIGR01178">
    <property type="entry name" value="ade"/>
    <property type="match status" value="1"/>
</dbReference>
<dbReference type="PANTHER" id="PTHR11113:SF2">
    <property type="entry name" value="ADENINE DEAMINASE"/>
    <property type="match status" value="1"/>
</dbReference>
<dbReference type="PANTHER" id="PTHR11113">
    <property type="entry name" value="N-ACETYLGLUCOSAMINE-6-PHOSPHATE DEACETYLASE"/>
    <property type="match status" value="1"/>
</dbReference>
<dbReference type="Pfam" id="PF13382">
    <property type="entry name" value="Adenine_deam_C"/>
    <property type="match status" value="1"/>
</dbReference>
<dbReference type="Pfam" id="PF01979">
    <property type="entry name" value="Amidohydro_1"/>
    <property type="match status" value="2"/>
</dbReference>
<dbReference type="SUPFAM" id="SSF51338">
    <property type="entry name" value="Composite domain of metallo-dependent hydrolases"/>
    <property type="match status" value="1"/>
</dbReference>
<dbReference type="SUPFAM" id="SSF51556">
    <property type="entry name" value="Metallo-dependent hydrolases"/>
    <property type="match status" value="1"/>
</dbReference>
<comment type="catalytic activity">
    <reaction evidence="1">
        <text>adenine + H2O + H(+) = hypoxanthine + NH4(+)</text>
        <dbReference type="Rhea" id="RHEA:23688"/>
        <dbReference type="ChEBI" id="CHEBI:15377"/>
        <dbReference type="ChEBI" id="CHEBI:15378"/>
        <dbReference type="ChEBI" id="CHEBI:16708"/>
        <dbReference type="ChEBI" id="CHEBI:17368"/>
        <dbReference type="ChEBI" id="CHEBI:28938"/>
        <dbReference type="EC" id="3.5.4.2"/>
    </reaction>
</comment>
<comment type="cofactor">
    <cofactor evidence="1">
        <name>Mn(2+)</name>
        <dbReference type="ChEBI" id="CHEBI:29035"/>
    </cofactor>
</comment>
<comment type="similarity">
    <text evidence="1">Belongs to the metallo-dependent hydrolases superfamily. Adenine deaminase family.</text>
</comment>
<gene>
    <name evidence="1" type="primary">ade</name>
    <name type="ordered locus">Mboo_1575</name>
</gene>
<name>ADEC_METB6</name>
<sequence length="558" mass="58705">MDAPPLHANLIPAARGTEPADLVLKNAMLFDAFSCSWEEGDLAIKDGIIVGTGRSYRGIRERDLGGALVVPGLIDAHVHIESSLLVPQEYAHLVAAHGTTTVIADPHEIANIAGKEGIEYMLACRAGLPVDILYMLPSCVPATPADVGGAVLDAGDLAGFPGRDGILGLGEMMNVPGVLGGDPGVLAKLVLSRIRDGHAPHLSGPDLNAYLLSGPDSDHECTTASEAKEKLRCGMYLFVREGSTEKNIAALVPVVTPYTVSRCSFCTDDCHADLLAHSGHIDRCIRTAVAGGLEPELALRMATLSPAERFSLPDRGALAPGRRADFCIVDDPRHFAVKETYSRGRPVAEYAAPQARPPVFAALRCTVPSRDQIRLFGTGRARVIGLVPGQILTESLTFDLDAAALPDISRDLLKLVVCNRYGKGSVGTGIVHGFGFKDGAIAASISHDAHNIVAAGTGDEVILSALTAVIRAGGGMAAVHKKDVTVLPLDCAGLMSTHPAREVIAGLDALSAATRRIGGIDDPFMYLSFLALTVIPALRLTDRGLFDAVAFRDVPVFP</sequence>
<keyword id="KW-0378">Hydrolase</keyword>
<keyword id="KW-0464">Manganese</keyword>
<keyword id="KW-1185">Reference proteome</keyword>
<organism>
    <name type="scientific">Methanoregula boonei (strain DSM 21154 / JCM 14090 / 6A8)</name>
    <dbReference type="NCBI Taxonomy" id="456442"/>
    <lineage>
        <taxon>Archaea</taxon>
        <taxon>Methanobacteriati</taxon>
        <taxon>Methanobacteriota</taxon>
        <taxon>Stenosarchaea group</taxon>
        <taxon>Methanomicrobia</taxon>
        <taxon>Methanomicrobiales</taxon>
        <taxon>Methanoregulaceae</taxon>
        <taxon>Methanoregula</taxon>
    </lineage>
</organism>
<feature type="chain" id="PRO_0000318550" description="Adenine deaminase">
    <location>
        <begin position="1"/>
        <end position="558"/>
    </location>
</feature>
<reference key="1">
    <citation type="journal article" date="2015" name="Microbiology">
        <title>Genome of Methanoregula boonei 6A8 reveals adaptations to oligotrophic peatland environments.</title>
        <authorList>
            <person name="Braeuer S."/>
            <person name="Cadillo-Quiroz H."/>
            <person name="Kyrpides N."/>
            <person name="Woyke T."/>
            <person name="Goodwin L."/>
            <person name="Detter C."/>
            <person name="Podell S."/>
            <person name="Yavitt J.B."/>
            <person name="Zinder S.H."/>
        </authorList>
    </citation>
    <scope>NUCLEOTIDE SEQUENCE [LARGE SCALE GENOMIC DNA]</scope>
    <source>
        <strain>DSM 21154 / JCM 14090 / 6A8</strain>
    </source>
</reference>
<accession>A7I8N1</accession>